<organism>
    <name type="scientific">Homo sapiens</name>
    <name type="common">Human</name>
    <dbReference type="NCBI Taxonomy" id="9606"/>
    <lineage>
        <taxon>Eukaryota</taxon>
        <taxon>Metazoa</taxon>
        <taxon>Chordata</taxon>
        <taxon>Craniata</taxon>
        <taxon>Vertebrata</taxon>
        <taxon>Euteleostomi</taxon>
        <taxon>Mammalia</taxon>
        <taxon>Eutheria</taxon>
        <taxon>Euarchontoglires</taxon>
        <taxon>Primates</taxon>
        <taxon>Haplorrhini</taxon>
        <taxon>Catarrhini</taxon>
        <taxon>Hominidae</taxon>
        <taxon>Homo</taxon>
    </lineage>
</organism>
<reference key="1">
    <citation type="journal article" date="2004" name="Int. J. Mol. Med.">
        <title>Cloning and characterization of a novel human cDNA encoding a J-domain protein (DNAJA5) from the fetal brain.</title>
        <authorList>
            <person name="Chen J."/>
            <person name="Yin G."/>
            <person name="Lu Y."/>
            <person name="Lou M."/>
            <person name="Cheng H."/>
            <person name="Ni X."/>
            <person name="Hu G."/>
            <person name="Luo C."/>
            <person name="Ying K."/>
            <person name="Xie Y."/>
            <person name="Mao Y."/>
        </authorList>
    </citation>
    <scope>NUCLEOTIDE SEQUENCE [MRNA] (ISOFORM 1)</scope>
    <scope>TISSUE SPECIFICITY</scope>
    <source>
        <tissue>Fetal brain</tissue>
    </source>
</reference>
<reference key="2">
    <citation type="submission" date="2002-11" db="EMBL/GenBank/DDBJ databases">
        <title>Cloning and characterization of a novel GS3 protein.</title>
        <authorList>
            <person name="Chen J."/>
            <person name="Xie Y."/>
            <person name="Mao Y."/>
        </authorList>
    </citation>
    <scope>NUCLEOTIDE SEQUENCE [MRNA] (ISOFORM 1)</scope>
</reference>
<reference key="3">
    <citation type="journal article" date="2004" name="Genome Res.">
        <title>The status, quality, and expansion of the NIH full-length cDNA project: the Mammalian Gene Collection (MGC).</title>
        <authorList>
            <consortium name="The MGC Project Team"/>
        </authorList>
    </citation>
    <scope>NUCLEOTIDE SEQUENCE [LARGE SCALE MRNA] (ISOFORM 1)</scope>
    <scope>NUCLEOTIDE SEQUENCE [LARGE SCALE MRNA] OF 126-458 (ISOFORM 3)</scope>
    <source>
        <tissue>Skin</tissue>
        <tissue>Uterus</tissue>
    </source>
</reference>
<reference key="4">
    <citation type="journal article" date="2004" name="Nat. Genet.">
        <title>Complete sequencing and characterization of 21,243 full-length human cDNAs.</title>
        <authorList>
            <person name="Ota T."/>
            <person name="Suzuki Y."/>
            <person name="Nishikawa T."/>
            <person name="Otsuki T."/>
            <person name="Sugiyama T."/>
            <person name="Irie R."/>
            <person name="Wakamatsu A."/>
            <person name="Hayashi K."/>
            <person name="Sato H."/>
            <person name="Nagai K."/>
            <person name="Kimura K."/>
            <person name="Makita H."/>
            <person name="Sekine M."/>
            <person name="Obayashi M."/>
            <person name="Nishi T."/>
            <person name="Shibahara T."/>
            <person name="Tanaka T."/>
            <person name="Ishii S."/>
            <person name="Yamamoto J."/>
            <person name="Saito K."/>
            <person name="Kawai Y."/>
            <person name="Isono Y."/>
            <person name="Nakamura Y."/>
            <person name="Nagahari K."/>
            <person name="Murakami K."/>
            <person name="Yasuda T."/>
            <person name="Iwayanagi T."/>
            <person name="Wagatsuma M."/>
            <person name="Shiratori A."/>
            <person name="Sudo H."/>
            <person name="Hosoiri T."/>
            <person name="Kaku Y."/>
            <person name="Kodaira H."/>
            <person name="Kondo H."/>
            <person name="Sugawara M."/>
            <person name="Takahashi M."/>
            <person name="Kanda K."/>
            <person name="Yokoi T."/>
            <person name="Furuya T."/>
            <person name="Kikkawa E."/>
            <person name="Omura Y."/>
            <person name="Abe K."/>
            <person name="Kamihara K."/>
            <person name="Katsuta N."/>
            <person name="Sato K."/>
            <person name="Tanikawa M."/>
            <person name="Yamazaki M."/>
            <person name="Ninomiya K."/>
            <person name="Ishibashi T."/>
            <person name="Yamashita H."/>
            <person name="Murakawa K."/>
            <person name="Fujimori K."/>
            <person name="Tanai H."/>
            <person name="Kimata M."/>
            <person name="Watanabe M."/>
            <person name="Hiraoka S."/>
            <person name="Chiba Y."/>
            <person name="Ishida S."/>
            <person name="Ono Y."/>
            <person name="Takiguchi S."/>
            <person name="Watanabe S."/>
            <person name="Yosida M."/>
            <person name="Hotuta T."/>
            <person name="Kusano J."/>
            <person name="Kanehori K."/>
            <person name="Takahashi-Fujii A."/>
            <person name="Hara H."/>
            <person name="Tanase T.-O."/>
            <person name="Nomura Y."/>
            <person name="Togiya S."/>
            <person name="Komai F."/>
            <person name="Hara R."/>
            <person name="Takeuchi K."/>
            <person name="Arita M."/>
            <person name="Imose N."/>
            <person name="Musashino K."/>
            <person name="Yuuki H."/>
            <person name="Oshima A."/>
            <person name="Sasaki N."/>
            <person name="Aotsuka S."/>
            <person name="Yoshikawa Y."/>
            <person name="Matsunawa H."/>
            <person name="Ichihara T."/>
            <person name="Shiohata N."/>
            <person name="Sano S."/>
            <person name="Moriya S."/>
            <person name="Momiyama H."/>
            <person name="Satoh N."/>
            <person name="Takami S."/>
            <person name="Terashima Y."/>
            <person name="Suzuki O."/>
            <person name="Nakagawa S."/>
            <person name="Senoh A."/>
            <person name="Mizoguchi H."/>
            <person name="Goto Y."/>
            <person name="Shimizu F."/>
            <person name="Wakebe H."/>
            <person name="Hishigaki H."/>
            <person name="Watanabe T."/>
            <person name="Sugiyama A."/>
            <person name="Takemoto M."/>
            <person name="Kawakami B."/>
            <person name="Yamazaki M."/>
            <person name="Watanabe K."/>
            <person name="Kumagai A."/>
            <person name="Itakura S."/>
            <person name="Fukuzumi Y."/>
            <person name="Fujimori Y."/>
            <person name="Komiyama M."/>
            <person name="Tashiro H."/>
            <person name="Tanigami A."/>
            <person name="Fujiwara T."/>
            <person name="Ono T."/>
            <person name="Yamada K."/>
            <person name="Fujii Y."/>
            <person name="Ozaki K."/>
            <person name="Hirao M."/>
            <person name="Ohmori Y."/>
            <person name="Kawabata A."/>
            <person name="Hikiji T."/>
            <person name="Kobatake N."/>
            <person name="Inagaki H."/>
            <person name="Ikema Y."/>
            <person name="Okamoto S."/>
            <person name="Okitani R."/>
            <person name="Kawakami T."/>
            <person name="Noguchi S."/>
            <person name="Itoh T."/>
            <person name="Shigeta K."/>
            <person name="Senba T."/>
            <person name="Matsumura K."/>
            <person name="Nakajima Y."/>
            <person name="Mizuno T."/>
            <person name="Morinaga M."/>
            <person name="Sasaki M."/>
            <person name="Togashi T."/>
            <person name="Oyama M."/>
            <person name="Hata H."/>
            <person name="Watanabe M."/>
            <person name="Komatsu T."/>
            <person name="Mizushima-Sugano J."/>
            <person name="Satoh T."/>
            <person name="Shirai Y."/>
            <person name="Takahashi Y."/>
            <person name="Nakagawa K."/>
            <person name="Okumura K."/>
            <person name="Nagase T."/>
            <person name="Nomura N."/>
            <person name="Kikuchi H."/>
            <person name="Masuho Y."/>
            <person name="Yamashita R."/>
            <person name="Nakai K."/>
            <person name="Yada T."/>
            <person name="Nakamura Y."/>
            <person name="Ohara O."/>
            <person name="Isogai T."/>
            <person name="Sugano S."/>
        </authorList>
    </citation>
    <scope>NUCLEOTIDE SEQUENCE [LARGE SCALE MRNA] OF 116-531 (ISOFORM 2)</scope>
    <source>
        <tissue>Brain</tissue>
    </source>
</reference>
<reference key="5">
    <citation type="journal article" date="2006" name="Cell">
        <title>Global, in vivo, and site-specific phosphorylation dynamics in signaling networks.</title>
        <authorList>
            <person name="Olsen J.V."/>
            <person name="Blagoev B."/>
            <person name="Gnad F."/>
            <person name="Macek B."/>
            <person name="Kumar C."/>
            <person name="Mortensen P."/>
            <person name="Mann M."/>
        </authorList>
    </citation>
    <scope>PHOSPHORYLATION [LARGE SCALE ANALYSIS] AT SER-283; SER-302 AND SER-370</scope>
    <scope>IDENTIFICATION BY MASS SPECTROMETRY [LARGE SCALE ANALYSIS]</scope>
    <source>
        <tissue>Cervix carcinoma</tissue>
    </source>
</reference>
<reference key="6">
    <citation type="journal article" date="2008" name="Proc. Natl. Acad. Sci. U.S.A.">
        <title>A quantitative atlas of mitotic phosphorylation.</title>
        <authorList>
            <person name="Dephoure N."/>
            <person name="Zhou C."/>
            <person name="Villen J."/>
            <person name="Beausoleil S.A."/>
            <person name="Bakalarski C.E."/>
            <person name="Elledge S.J."/>
            <person name="Gygi S.P."/>
        </authorList>
    </citation>
    <scope>PHOSPHORYLATION [LARGE SCALE ANALYSIS] AT SER-370</scope>
    <scope>IDENTIFICATION BY MASS SPECTROMETRY [LARGE SCALE ANALYSIS]</scope>
    <source>
        <tissue>Cervix carcinoma</tissue>
    </source>
</reference>
<reference key="7">
    <citation type="journal article" date="2009" name="Sci. Signal.">
        <title>Quantitative phosphoproteomic analysis of T cell receptor signaling reveals system-wide modulation of protein-protein interactions.</title>
        <authorList>
            <person name="Mayya V."/>
            <person name="Lundgren D.H."/>
            <person name="Hwang S.-I."/>
            <person name="Rezaul K."/>
            <person name="Wu L."/>
            <person name="Eng J.K."/>
            <person name="Rodionov V."/>
            <person name="Han D.K."/>
        </authorList>
    </citation>
    <scope>PHOSPHORYLATION [LARGE SCALE ANALYSIS] AT SER-370</scope>
    <scope>IDENTIFICATION BY MASS SPECTROMETRY [LARGE SCALE ANALYSIS]</scope>
    <source>
        <tissue>Leukemic T-cell</tissue>
    </source>
</reference>
<reference key="8">
    <citation type="journal article" date="2010" name="Sci. Signal.">
        <title>Quantitative phosphoproteomics reveals widespread full phosphorylation site occupancy during mitosis.</title>
        <authorList>
            <person name="Olsen J.V."/>
            <person name="Vermeulen M."/>
            <person name="Santamaria A."/>
            <person name="Kumar C."/>
            <person name="Miller M.L."/>
            <person name="Jensen L.J."/>
            <person name="Gnad F."/>
            <person name="Cox J."/>
            <person name="Jensen T.S."/>
            <person name="Nigg E.A."/>
            <person name="Brunak S."/>
            <person name="Mann M."/>
        </authorList>
    </citation>
    <scope>PHOSPHORYLATION [LARGE SCALE ANALYSIS] AT SER-283 AND SER-370</scope>
    <scope>IDENTIFICATION BY MASS SPECTROMETRY [LARGE SCALE ANALYSIS]</scope>
    <source>
        <tissue>Cervix carcinoma</tissue>
    </source>
</reference>
<reference key="9">
    <citation type="journal article" date="2011" name="BMC Syst. Biol.">
        <title>Initial characterization of the human central proteome.</title>
        <authorList>
            <person name="Burkard T.R."/>
            <person name="Planyavsky M."/>
            <person name="Kaupe I."/>
            <person name="Breitwieser F.P."/>
            <person name="Buerckstuemmer T."/>
            <person name="Bennett K.L."/>
            <person name="Superti-Furga G."/>
            <person name="Colinge J."/>
        </authorList>
    </citation>
    <scope>IDENTIFICATION BY MASS SPECTROMETRY [LARGE SCALE ANALYSIS]</scope>
</reference>
<reference key="10">
    <citation type="journal article" date="2011" name="Sci. Signal.">
        <title>System-wide temporal characterization of the proteome and phosphoproteome of human embryonic stem cell differentiation.</title>
        <authorList>
            <person name="Rigbolt K.T."/>
            <person name="Prokhorova T.A."/>
            <person name="Akimov V."/>
            <person name="Henningsen J."/>
            <person name="Johansen P.T."/>
            <person name="Kratchmarova I."/>
            <person name="Kassem M."/>
            <person name="Mann M."/>
            <person name="Olsen J.V."/>
            <person name="Blagoev B."/>
        </authorList>
    </citation>
    <scope>PHOSPHORYLATION [LARGE SCALE ANALYSIS] AT SER-283</scope>
    <scope>IDENTIFICATION BY MASS SPECTROMETRY [LARGE SCALE ANALYSIS]</scope>
</reference>
<reference key="11">
    <citation type="journal article" date="2014" name="J. Proteomics">
        <title>An enzyme assisted RP-RPLC approach for in-depth analysis of human liver phosphoproteome.</title>
        <authorList>
            <person name="Bian Y."/>
            <person name="Song C."/>
            <person name="Cheng K."/>
            <person name="Dong M."/>
            <person name="Wang F."/>
            <person name="Huang J."/>
            <person name="Sun D."/>
            <person name="Wang L."/>
            <person name="Ye M."/>
            <person name="Zou H."/>
        </authorList>
    </citation>
    <scope>PHOSPHORYLATION [LARGE SCALE ANALYSIS] AT SER-511</scope>
    <scope>IDENTIFICATION BY MASS SPECTROMETRY [LARGE SCALE ANALYSIS]</scope>
    <source>
        <tissue>Liver</tissue>
    </source>
</reference>
<reference key="12">
    <citation type="journal article" date="2006" name="Science">
        <title>The consensus coding sequences of human breast and colorectal cancers.</title>
        <authorList>
            <person name="Sjoeblom T."/>
            <person name="Jones S."/>
            <person name="Wood L.D."/>
            <person name="Parsons D.W."/>
            <person name="Lin J."/>
            <person name="Barber T.D."/>
            <person name="Mandelker D."/>
            <person name="Leary R.J."/>
            <person name="Ptak J."/>
            <person name="Silliman N."/>
            <person name="Szabo S."/>
            <person name="Buckhaults P."/>
            <person name="Farrell C."/>
            <person name="Meeh P."/>
            <person name="Markowitz S.D."/>
            <person name="Willis J."/>
            <person name="Dawson D."/>
            <person name="Willson J.K.V."/>
            <person name="Gazdar A.F."/>
            <person name="Hartigan J."/>
            <person name="Wu L."/>
            <person name="Liu C."/>
            <person name="Parmigiani G."/>
            <person name="Park B.H."/>
            <person name="Bachman K.E."/>
            <person name="Papadopoulos N."/>
            <person name="Vogelstein B."/>
            <person name="Kinzler K.W."/>
            <person name="Velculescu V.E."/>
        </authorList>
    </citation>
    <scope>VARIANT [LARGE SCALE ANALYSIS] ASN-214</scope>
</reference>
<reference key="13">
    <citation type="journal article" date="2016" name="Am. J. Hum. Genet.">
        <title>DNAJC21 mutations link a cancer-prone bone marrow failure syndrome to corruption in 60S ribosome subunit maturation.</title>
        <authorList>
            <person name="Tummala H."/>
            <person name="Walne A.J."/>
            <person name="Williams M."/>
            <person name="Bockett N."/>
            <person name="Collopy L."/>
            <person name="Cardoso S."/>
            <person name="Ellison A."/>
            <person name="Wynn R."/>
            <person name="Leblanc T."/>
            <person name="Fitzgibbon J."/>
            <person name="Kelsell D.P."/>
            <person name="van Heel D.A."/>
            <person name="Payne E."/>
            <person name="Plagnol V."/>
            <person name="Dokal I."/>
            <person name="Vulliamy T."/>
        </authorList>
    </citation>
    <scope>VARIANT BMFS3 ALA-32</scope>
    <scope>INVOLVEMENT IN BMFS3</scope>
    <scope>INTERACTION WITH HSPA8; PA2G4 AND ZNF622</scope>
    <scope>SUBCELLULAR LOCATION</scope>
    <scope>CHARACTERIZATION OF VARIANT BMFS3 ALA-32</scope>
    <scope>FUNCTION</scope>
</reference>
<gene>
    <name type="primary">DNAJC21</name>
    <name type="synonym">DNAJA5</name>
</gene>
<dbReference type="EMBL" id="AY258422">
    <property type="protein sequence ID" value="AAP81807.1"/>
    <property type="molecule type" value="mRNA"/>
</dbReference>
<dbReference type="EMBL" id="AY177688">
    <property type="protein sequence ID" value="AAO46910.1"/>
    <property type="molecule type" value="mRNA"/>
</dbReference>
<dbReference type="EMBL" id="BC050472">
    <property type="protein sequence ID" value="AAH50472.1"/>
    <property type="molecule type" value="mRNA"/>
</dbReference>
<dbReference type="EMBL" id="BC065745">
    <property type="protein sequence ID" value="AAH65745.1"/>
    <property type="status" value="ALT_SEQ"/>
    <property type="molecule type" value="mRNA"/>
</dbReference>
<dbReference type="EMBL" id="BC107577">
    <property type="protein sequence ID" value="AAI07578.1"/>
    <property type="status" value="ALT_SEQ"/>
    <property type="molecule type" value="mRNA"/>
</dbReference>
<dbReference type="EMBL" id="AK127749">
    <property type="protein sequence ID" value="BAC87112.1"/>
    <property type="status" value="ALT_INIT"/>
    <property type="molecule type" value="mRNA"/>
</dbReference>
<dbReference type="CCDS" id="CCDS34144.1">
    <molecule id="Q5F1R6-1"/>
</dbReference>
<dbReference type="CCDS" id="CCDS3907.2">
    <molecule id="Q5F1R6-2"/>
</dbReference>
<dbReference type="CCDS" id="CCDS87294.1">
    <molecule id="Q5F1R6-3"/>
</dbReference>
<dbReference type="RefSeq" id="NP_001012339.2">
    <molecule id="Q5F1R6-1"/>
    <property type="nucleotide sequence ID" value="NM_001012339.3"/>
</dbReference>
<dbReference type="RefSeq" id="NP_001335349.1">
    <molecule id="Q5F1R6-3"/>
    <property type="nucleotide sequence ID" value="NM_001348420.2"/>
</dbReference>
<dbReference type="RefSeq" id="NP_919259.3">
    <molecule id="Q5F1R6-2"/>
    <property type="nucleotide sequence ID" value="NM_194283.4"/>
</dbReference>
<dbReference type="SMR" id="Q5F1R6"/>
<dbReference type="BioGRID" id="126389">
    <property type="interactions" value="85"/>
</dbReference>
<dbReference type="FunCoup" id="Q5F1R6">
    <property type="interactions" value="1930"/>
</dbReference>
<dbReference type="IntAct" id="Q5F1R6">
    <property type="interactions" value="32"/>
</dbReference>
<dbReference type="STRING" id="9606.ENSP00000371451"/>
<dbReference type="iPTMnet" id="Q5F1R6"/>
<dbReference type="PhosphoSitePlus" id="Q5F1R6"/>
<dbReference type="BioMuta" id="DNAJC21"/>
<dbReference type="DMDM" id="296434479"/>
<dbReference type="jPOST" id="Q5F1R6"/>
<dbReference type="MassIVE" id="Q5F1R6"/>
<dbReference type="PeptideAtlas" id="Q5F1R6"/>
<dbReference type="ProteomicsDB" id="62776">
    <molecule id="Q5F1R6-1"/>
</dbReference>
<dbReference type="ProteomicsDB" id="62777">
    <molecule id="Q5F1R6-2"/>
</dbReference>
<dbReference type="ProteomicsDB" id="62778">
    <molecule id="Q5F1R6-3"/>
</dbReference>
<dbReference type="Pumba" id="Q5F1R6"/>
<dbReference type="Antibodypedia" id="22862">
    <property type="antibodies" value="56 antibodies from 14 providers"/>
</dbReference>
<dbReference type="DNASU" id="134218"/>
<dbReference type="Ensembl" id="ENST00000382021.2">
    <molecule id="Q5F1R6-2"/>
    <property type="protein sequence ID" value="ENSP00000371451.2"/>
    <property type="gene ID" value="ENSG00000168724.18"/>
</dbReference>
<dbReference type="Ensembl" id="ENST00000642851.1">
    <molecule id="Q5F1R6-3"/>
    <property type="protein sequence ID" value="ENSP00000496545.1"/>
    <property type="gene ID" value="ENSG00000168724.18"/>
</dbReference>
<dbReference type="Ensembl" id="ENST00000648817.1">
    <molecule id="Q5F1R6-1"/>
    <property type="protein sequence ID" value="ENSP00000497410.1"/>
    <property type="gene ID" value="ENSG00000168724.18"/>
</dbReference>
<dbReference type="GeneID" id="134218"/>
<dbReference type="KEGG" id="hsa:134218"/>
<dbReference type="MANE-Select" id="ENST00000648817.1">
    <property type="protein sequence ID" value="ENSP00000497410.1"/>
    <property type="RefSeq nucleotide sequence ID" value="NM_001012339.3"/>
    <property type="RefSeq protein sequence ID" value="NP_001012339.2"/>
</dbReference>
<dbReference type="UCSC" id="uc003jjb.3">
    <molecule id="Q5F1R6-1"/>
    <property type="organism name" value="human"/>
</dbReference>
<dbReference type="AGR" id="HGNC:27030"/>
<dbReference type="CTD" id="134218"/>
<dbReference type="DisGeNET" id="134218"/>
<dbReference type="GeneCards" id="DNAJC21"/>
<dbReference type="GeneReviews" id="DNAJC21"/>
<dbReference type="HGNC" id="HGNC:27030">
    <property type="gene designation" value="DNAJC21"/>
</dbReference>
<dbReference type="HPA" id="ENSG00000168724">
    <property type="expression patterns" value="Low tissue specificity"/>
</dbReference>
<dbReference type="MalaCards" id="DNAJC21"/>
<dbReference type="MIM" id="617048">
    <property type="type" value="gene"/>
</dbReference>
<dbReference type="MIM" id="617052">
    <property type="type" value="phenotype"/>
</dbReference>
<dbReference type="neXtProt" id="NX_Q5F1R6"/>
<dbReference type="OpenTargets" id="ENSG00000168724"/>
<dbReference type="Orphanet" id="811">
    <property type="disease" value="Shwachman-Diamond syndrome"/>
</dbReference>
<dbReference type="PharmGKB" id="PA162383874"/>
<dbReference type="VEuPathDB" id="HostDB:ENSG00000168724"/>
<dbReference type="eggNOG" id="KOG0714">
    <property type="taxonomic scope" value="Eukaryota"/>
</dbReference>
<dbReference type="eggNOG" id="KOG0717">
    <property type="taxonomic scope" value="Eukaryota"/>
</dbReference>
<dbReference type="GeneTree" id="ENSGT00510000047097"/>
<dbReference type="HOGENOM" id="CLU_009539_1_0_1"/>
<dbReference type="InParanoid" id="Q5F1R6"/>
<dbReference type="OMA" id="RANHEES"/>
<dbReference type="OrthoDB" id="5894at2759"/>
<dbReference type="PAN-GO" id="Q5F1R6">
    <property type="GO annotations" value="1 GO annotation based on evolutionary models"/>
</dbReference>
<dbReference type="PhylomeDB" id="Q5F1R6"/>
<dbReference type="TreeFam" id="TF314518"/>
<dbReference type="PathwayCommons" id="Q5F1R6"/>
<dbReference type="SignaLink" id="Q5F1R6"/>
<dbReference type="BioGRID-ORCS" id="134218">
    <property type="hits" value="60 hits in 1159 CRISPR screens"/>
</dbReference>
<dbReference type="CD-CODE" id="91857CE7">
    <property type="entry name" value="Nucleolus"/>
</dbReference>
<dbReference type="ChiTaRS" id="DNAJC21">
    <property type="organism name" value="human"/>
</dbReference>
<dbReference type="GenomeRNAi" id="134218"/>
<dbReference type="Pharos" id="Q5F1R6">
    <property type="development level" value="Tdark"/>
</dbReference>
<dbReference type="PRO" id="PR:Q5F1R6"/>
<dbReference type="Proteomes" id="UP000005640">
    <property type="component" value="Chromosome 5"/>
</dbReference>
<dbReference type="RNAct" id="Q5F1R6">
    <property type="molecule type" value="protein"/>
</dbReference>
<dbReference type="Bgee" id="ENSG00000168724">
    <property type="expression patterns" value="Expressed in epithelial cell of pancreas and 185 other cell types or tissues"/>
</dbReference>
<dbReference type="ExpressionAtlas" id="Q5F1R6">
    <property type="expression patterns" value="baseline and differential"/>
</dbReference>
<dbReference type="GO" id="GO:0005737">
    <property type="term" value="C:cytoplasm"/>
    <property type="evidence" value="ECO:0000318"/>
    <property type="project" value="GO_Central"/>
</dbReference>
<dbReference type="GO" id="GO:0005829">
    <property type="term" value="C:cytosol"/>
    <property type="evidence" value="ECO:0000314"/>
    <property type="project" value="HPA"/>
</dbReference>
<dbReference type="GO" id="GO:0005730">
    <property type="term" value="C:nucleolus"/>
    <property type="evidence" value="ECO:0000314"/>
    <property type="project" value="HPA"/>
</dbReference>
<dbReference type="GO" id="GO:0005840">
    <property type="term" value="C:ribosome"/>
    <property type="evidence" value="ECO:0000303"/>
    <property type="project" value="UniProtKB"/>
</dbReference>
<dbReference type="GO" id="GO:0003723">
    <property type="term" value="F:RNA binding"/>
    <property type="evidence" value="ECO:0007005"/>
    <property type="project" value="UniProtKB"/>
</dbReference>
<dbReference type="GO" id="GO:0008270">
    <property type="term" value="F:zinc ion binding"/>
    <property type="evidence" value="ECO:0007669"/>
    <property type="project" value="UniProtKB-KW"/>
</dbReference>
<dbReference type="GO" id="GO:0006457">
    <property type="term" value="P:protein folding"/>
    <property type="evidence" value="ECO:0000303"/>
    <property type="project" value="UniProtKB"/>
</dbReference>
<dbReference type="CDD" id="cd06257">
    <property type="entry name" value="DnaJ"/>
    <property type="match status" value="1"/>
</dbReference>
<dbReference type="FunFam" id="1.10.287.110:FF:000046">
    <property type="entry name" value="dnaJ homolog subfamily C member 21"/>
    <property type="match status" value="1"/>
</dbReference>
<dbReference type="FunFam" id="3.30.160.60:FF:001809">
    <property type="entry name" value="dnaJ homolog subfamily C member 21 isoform X1"/>
    <property type="match status" value="1"/>
</dbReference>
<dbReference type="Gene3D" id="3.30.160.60">
    <property type="entry name" value="Classic Zinc Finger"/>
    <property type="match status" value="1"/>
</dbReference>
<dbReference type="Gene3D" id="1.10.287.110">
    <property type="entry name" value="DnaJ domain"/>
    <property type="match status" value="1"/>
</dbReference>
<dbReference type="InterPro" id="IPR051964">
    <property type="entry name" value="Chaperone_stress_response"/>
</dbReference>
<dbReference type="InterPro" id="IPR001623">
    <property type="entry name" value="DnaJ_domain"/>
</dbReference>
<dbReference type="InterPro" id="IPR018253">
    <property type="entry name" value="DnaJ_domain_CS"/>
</dbReference>
<dbReference type="InterPro" id="IPR036869">
    <property type="entry name" value="J_dom_sf"/>
</dbReference>
<dbReference type="InterPro" id="IPR003604">
    <property type="entry name" value="Matrin/U1-like-C_Znf_C2H2"/>
</dbReference>
<dbReference type="InterPro" id="IPR022755">
    <property type="entry name" value="Znf_C2H2_jaz"/>
</dbReference>
<dbReference type="InterPro" id="IPR036236">
    <property type="entry name" value="Znf_C2H2_sf"/>
</dbReference>
<dbReference type="InterPro" id="IPR013087">
    <property type="entry name" value="Znf_C2H2_type"/>
</dbReference>
<dbReference type="InterPro" id="IPR054076">
    <property type="entry name" value="ZUO1-like_ZHD"/>
</dbReference>
<dbReference type="PANTHER" id="PTHR44029">
    <property type="entry name" value="DNAJ HOMOLOG SUBFAMILY C MEMBER 21"/>
    <property type="match status" value="1"/>
</dbReference>
<dbReference type="PANTHER" id="PTHR44029:SF1">
    <property type="entry name" value="DNAJ HOMOLOG SUBFAMILY C MEMBER 21"/>
    <property type="match status" value="1"/>
</dbReference>
<dbReference type="Pfam" id="PF00226">
    <property type="entry name" value="DnaJ"/>
    <property type="match status" value="1"/>
</dbReference>
<dbReference type="Pfam" id="PF12171">
    <property type="entry name" value="zf-C2H2_jaz"/>
    <property type="match status" value="1"/>
</dbReference>
<dbReference type="Pfam" id="PF21884">
    <property type="entry name" value="ZUO1-like_ZHD"/>
    <property type="match status" value="1"/>
</dbReference>
<dbReference type="PRINTS" id="PR00625">
    <property type="entry name" value="JDOMAIN"/>
</dbReference>
<dbReference type="SMART" id="SM00271">
    <property type="entry name" value="DnaJ"/>
    <property type="match status" value="1"/>
</dbReference>
<dbReference type="SMART" id="SM00355">
    <property type="entry name" value="ZnF_C2H2"/>
    <property type="match status" value="2"/>
</dbReference>
<dbReference type="SMART" id="SM00451">
    <property type="entry name" value="ZnF_U1"/>
    <property type="match status" value="1"/>
</dbReference>
<dbReference type="SUPFAM" id="SSF57667">
    <property type="entry name" value="beta-beta-alpha zinc fingers"/>
    <property type="match status" value="1"/>
</dbReference>
<dbReference type="SUPFAM" id="SSF46565">
    <property type="entry name" value="Chaperone J-domain"/>
    <property type="match status" value="1"/>
</dbReference>
<dbReference type="PROSITE" id="PS00636">
    <property type="entry name" value="DNAJ_1"/>
    <property type="match status" value="1"/>
</dbReference>
<dbReference type="PROSITE" id="PS50076">
    <property type="entry name" value="DNAJ_2"/>
    <property type="match status" value="1"/>
</dbReference>
<dbReference type="PROSITE" id="PS00028">
    <property type="entry name" value="ZINC_FINGER_C2H2_1"/>
    <property type="match status" value="2"/>
</dbReference>
<dbReference type="PROSITE" id="PS50157">
    <property type="entry name" value="ZINC_FINGER_C2H2_2"/>
    <property type="match status" value="1"/>
</dbReference>
<comment type="function">
    <text evidence="6">May act as a co-chaperone for HSP70. May play a role in ribosomal RNA (rRNA) biogenesis, possibly in the maturation of the 60S subunit. Binds the precursor 45S rRNA.</text>
</comment>
<comment type="subunit">
    <text evidence="6">Interacts with HSPA8, PA2G4 and ZNF622.</text>
</comment>
<comment type="interaction">
    <interactant intactId="EBI-2654581">
        <id>Q5F1R6</id>
    </interactant>
    <interactant intactId="EBI-466029">
        <id>P42858</id>
        <label>HTT</label>
    </interactant>
    <organismsDiffer>false</organismsDiffer>
    <experiments>6</experiments>
</comment>
<comment type="interaction">
    <interactant intactId="EBI-2654581">
        <id>Q5F1R6</id>
    </interactant>
    <interactant intactId="EBI-2690033">
        <id>Q99551</id>
        <label>MTERF1</label>
    </interactant>
    <organismsDiffer>false</organismsDiffer>
    <experiments>2</experiments>
</comment>
<comment type="subcellular location">
    <subcellularLocation>
        <location evidence="6">Cytoplasm</location>
    </subcellularLocation>
    <subcellularLocation>
        <location evidence="6">Nucleus</location>
    </subcellularLocation>
    <subcellularLocation>
        <location evidence="6">Nucleus</location>
        <location evidence="6">Nucleolus</location>
    </subcellularLocation>
    <text evidence="6">Within the nucleus, localizes primarily to the nucleolus.</text>
</comment>
<comment type="alternative products">
    <event type="alternative splicing"/>
    <isoform>
        <id>Q5F1R6-1</id>
        <name>1</name>
        <sequence type="displayed"/>
    </isoform>
    <isoform>
        <id>Q5F1R6-2</id>
        <name>2</name>
        <sequence type="described" ref="VSP_024005"/>
    </isoform>
    <isoform>
        <id>Q5F1R6-3</id>
        <name>3</name>
        <sequence type="described" ref="VSP_024004"/>
    </isoform>
</comment>
<comment type="tissue specificity">
    <text evidence="4">Expressed in brain, placenta, kidney and pancreas.</text>
</comment>
<comment type="disease" evidence="6">
    <disease id="DI-04752">
        <name>Bone marrow failure syndrome 3</name>
        <acronym>BMFS3</acronym>
        <description>A form of bone marrow failure syndrome, a heterogeneous group of life-threatening disorders characterized by hematopoietic defects in association with a range of variable extra-hematopoietic manifestations. BMFS3 is characterized by pancytopenia with onset in early childhood. Some patients have additional variable non-specific features, including poor growth, microcephaly, and skin anomalies. BMFS3 inheritance is autosomal recessive.</description>
        <dbReference type="MIM" id="617052"/>
    </disease>
    <text>The disease is caused by variants affecting the gene represented in this entry.</text>
</comment>
<comment type="sequence caution" evidence="9">
    <conflict type="miscellaneous discrepancy">
        <sequence resource="EMBL-CDS" id="AAH65745"/>
    </conflict>
    <text>Contaminating sequence. Potential poly-A sequence.</text>
</comment>
<comment type="sequence caution" evidence="9">
    <conflict type="miscellaneous discrepancy">
        <sequence resource="EMBL-CDS" id="AAI07578"/>
    </conflict>
    <text>Contaminating sequence. Potential poly-A sequence.</text>
</comment>
<comment type="sequence caution" evidence="9">
    <conflict type="erroneous initiation">
        <sequence resource="EMBL-CDS" id="BAC87112"/>
    </conflict>
    <text>Truncated N-terminus.</text>
</comment>
<name>DJC21_HUMAN</name>
<protein>
    <recommendedName>
        <fullName>DnaJ homolog subfamily C member 21</fullName>
    </recommendedName>
    <alternativeName>
        <fullName>DnaJ homolog subfamily A member 5</fullName>
    </alternativeName>
    <alternativeName>
        <fullName>Protein GS3</fullName>
    </alternativeName>
</protein>
<sequence length="531" mass="62028">MKCHYEALGVRRDASEEELKKAYRKLALKWHPDKNLDNAAEAAEQFKLIQAAYDVLSDPQERAWYDNHREALLKGGFDGEYQDDSLDLLRYFTVTCYSGYGDDEKGFYTVYRNVFEMIAKEELESVLEEEVDDFPTFGDSQSDYDTVVHPFYAYWQSFCTQKNFAWKEEYDTRQASNRWEKRAMEKENKKIRDKARKEKNELVRQLVAFIRKRDKRVQAHRKLVEEQNAEKARKAEEMRRQQKLKQAKLVEQYREQSWMTMANLEKELQEMEARYEKEFGDGSDENEMEEHELKDEEDGKDSDEAEDAELYDDLYCPACDKSFKTEKAMKNHEKSKKHREMVALLKQQLEEEEENFSRPQIDENPLDDNSEEEMEDAPKQKLSKKQKKKKQKPAQNYDDNFNVNGPGEGVKVDPEDTNLNQDSAKELEDSPQENVSVTEIIKPCDDPKSEAKSVPKPKGKKTKDMKKPVRVPAEPQTMSVLISCTTCHSEFPSRNKLFDHLKATGHARAPSSSSLNSATSSQSKKEKRKNR</sequence>
<evidence type="ECO:0000255" key="1">
    <source>
        <dbReference type="PROSITE-ProRule" id="PRU00042"/>
    </source>
</evidence>
<evidence type="ECO:0000255" key="2">
    <source>
        <dbReference type="PROSITE-ProRule" id="PRU00286"/>
    </source>
</evidence>
<evidence type="ECO:0000256" key="3">
    <source>
        <dbReference type="SAM" id="MobiDB-lite"/>
    </source>
</evidence>
<evidence type="ECO:0000269" key="4">
    <source>
    </source>
</evidence>
<evidence type="ECO:0000269" key="5">
    <source>
    </source>
</evidence>
<evidence type="ECO:0000269" key="6">
    <source>
    </source>
</evidence>
<evidence type="ECO:0000303" key="7">
    <source>
    </source>
</evidence>
<evidence type="ECO:0000303" key="8">
    <source>
    </source>
</evidence>
<evidence type="ECO:0000305" key="9"/>
<evidence type="ECO:0007744" key="10">
    <source>
    </source>
</evidence>
<evidence type="ECO:0007744" key="11">
    <source>
    </source>
</evidence>
<evidence type="ECO:0007744" key="12">
    <source>
    </source>
</evidence>
<evidence type="ECO:0007744" key="13">
    <source>
    </source>
</evidence>
<evidence type="ECO:0007744" key="14">
    <source>
    </source>
</evidence>
<evidence type="ECO:0007744" key="15">
    <source>
    </source>
</evidence>
<keyword id="KW-0025">Alternative splicing</keyword>
<keyword id="KW-0143">Chaperone</keyword>
<keyword id="KW-0963">Cytoplasm</keyword>
<keyword id="KW-0479">Metal-binding</keyword>
<keyword id="KW-0539">Nucleus</keyword>
<keyword id="KW-0597">Phosphoprotein</keyword>
<keyword id="KW-1267">Proteomics identification</keyword>
<keyword id="KW-1185">Reference proteome</keyword>
<keyword id="KW-0677">Repeat</keyword>
<keyword id="KW-0862">Zinc</keyword>
<keyword id="KW-0863">Zinc-finger</keyword>
<feature type="chain" id="PRO_0000281475" description="DnaJ homolog subfamily C member 21">
    <location>
        <begin position="1"/>
        <end position="531"/>
    </location>
</feature>
<feature type="domain" description="J" evidence="2">
    <location>
        <begin position="3"/>
        <end position="69"/>
    </location>
</feature>
<feature type="zinc finger region" description="C2H2-type 1" evidence="1">
    <location>
        <begin position="314"/>
        <end position="338"/>
    </location>
</feature>
<feature type="zinc finger region" description="C2H2-type 2" evidence="1">
    <location>
        <begin position="482"/>
        <end position="506"/>
    </location>
</feature>
<feature type="region of interest" description="Disordered" evidence="3">
    <location>
        <begin position="279"/>
        <end position="311"/>
    </location>
</feature>
<feature type="region of interest" description="Disordered" evidence="3">
    <location>
        <begin position="327"/>
        <end position="474"/>
    </location>
</feature>
<feature type="region of interest" description="Disordered" evidence="3">
    <location>
        <begin position="502"/>
        <end position="531"/>
    </location>
</feature>
<feature type="compositionally biased region" description="Acidic residues" evidence="3">
    <location>
        <begin position="281"/>
        <end position="311"/>
    </location>
</feature>
<feature type="compositionally biased region" description="Acidic residues" evidence="3">
    <location>
        <begin position="364"/>
        <end position="375"/>
    </location>
</feature>
<feature type="compositionally biased region" description="Basic residues" evidence="3">
    <location>
        <begin position="381"/>
        <end position="392"/>
    </location>
</feature>
<feature type="compositionally biased region" description="Polar residues" evidence="3">
    <location>
        <begin position="393"/>
        <end position="403"/>
    </location>
</feature>
<feature type="compositionally biased region" description="Basic and acidic residues" evidence="3">
    <location>
        <begin position="442"/>
        <end position="453"/>
    </location>
</feature>
<feature type="compositionally biased region" description="Basic residues" evidence="3">
    <location>
        <begin position="455"/>
        <end position="464"/>
    </location>
</feature>
<feature type="compositionally biased region" description="Low complexity" evidence="3">
    <location>
        <begin position="511"/>
        <end position="522"/>
    </location>
</feature>
<feature type="modified residue" description="Phosphoserine" evidence="10 13 14">
    <location>
        <position position="283"/>
    </location>
</feature>
<feature type="modified residue" description="Phosphoserine" evidence="10">
    <location>
        <position position="302"/>
    </location>
</feature>
<feature type="modified residue" description="Phosphoserine" evidence="10 11 12 13">
    <location>
        <position position="370"/>
    </location>
</feature>
<feature type="modified residue" description="Phosphoserine" evidence="15">
    <location>
        <position position="511"/>
    </location>
</feature>
<feature type="splice variant" id="VSP_024004" description="In isoform 3." evidence="8">
    <original>K</original>
    <variation>KVKYLTFRFIFALR</variation>
    <location>
        <position position="381"/>
    </location>
</feature>
<feature type="splice variant" id="VSP_024005" description="In isoform 2." evidence="7">
    <original>Q</original>
    <variation>QDVPGKDSYLPAAHFQMAWGKKCVLGERRDGESEHKCAKMLLENRQ</variation>
    <location>
        <position position="395"/>
    </location>
</feature>
<feature type="sequence variant" id="VAR_076802" description="In BMFS3; loss of HSPA8-binding; no effect on PA2G4-, nor on ZNF622-binding; dbSNP:rs879253818." evidence="6">
    <original>P</original>
    <variation>A</variation>
    <location>
        <position position="32"/>
    </location>
</feature>
<feature type="sequence variant" id="VAR_036163" description="In a breast cancer sample; somatic mutation." evidence="5">
    <original>D</original>
    <variation>N</variation>
    <location>
        <position position="214"/>
    </location>
</feature>
<feature type="sequence variant" id="VAR_061145" description="In dbSNP:rs34908091.">
    <original>E</original>
    <variation>K</variation>
    <location>
        <position position="433"/>
    </location>
</feature>
<feature type="sequence conflict" description="In Ref. 1; AAP81807 and 2; AAO46910." evidence="9" ref="1 2">
    <original>A</original>
    <variation>V</variation>
    <location>
        <position position="509"/>
    </location>
</feature>
<proteinExistence type="evidence at protein level"/>
<accession>Q5F1R6</accession>
<accession>Q3B7J9</accession>
<accession>Q6P086</accession>
<accession>Q6ZS43</accession>
<accession>Q86VC6</accession>